<keyword id="KW-0067">ATP-binding</keyword>
<keyword id="KW-0131">Cell cycle</keyword>
<keyword id="KW-0132">Cell division</keyword>
<keyword id="KW-0133">Cell shape</keyword>
<keyword id="KW-0961">Cell wall biogenesis/degradation</keyword>
<keyword id="KW-0963">Cytoplasm</keyword>
<keyword id="KW-0436">Ligase</keyword>
<keyword id="KW-0547">Nucleotide-binding</keyword>
<keyword id="KW-0573">Peptidoglycan synthesis</keyword>
<proteinExistence type="inferred from homology"/>
<sequence>MSGLPRSVPDVLDPLGPGAPVLVAGGRVTGQAVAAVLTRFGATPTVCDDDPVMLRPHAERGLPTVSSSDAVQQITGYALVVASPGFSPATPLLAAAAAAGVPIWGDVELAWRLDAAGCYGPPRSWLVVTGTNGKTTTTSMLHAMLIAGGRRAVLCGNIGSAVLDVLDEPAELLAVELSSFQLHWAPSLRPEAGAVLNIAEDHLDWHATMAEYTAAKARVLTGGVAVAGLDDSRAAALLDGSPAQVRVGFRLGEPAAGELGVRDAHLVDRAFSDDLTLLPVASIPVPGPVGVLDALAAAALARSVGVPAGAIADAVTSFRVGRHRAEVVAVADGITYVDDSKATNPHAARASVLAYPRVVWIAGGLLKGASLHAEVAAMASRLVGAVLIGRDRAAVAEALSRHAPDVPVVQVVAGEDTGMPATVEVPVACVLDVAKDDKAGETVGAAVMTAAVAAARRMAQPGDTVLLAPAGASFDQFTGYADRGEAFATAVRAVIR</sequence>
<gene>
    <name evidence="2" type="primary">murD</name>
    <name type="ordered locus">JTY_2166</name>
</gene>
<accession>C1AQ71</accession>
<comment type="function">
    <text evidence="2">Cell wall formation. Catalyzes the addition of glutamate to the nucleotide precursor UDP-N-acetylmuramoyl-L-alanine (UMA).</text>
</comment>
<comment type="catalytic activity">
    <reaction evidence="2">
        <text>UDP-N-acetyl-alpha-D-muramoyl-L-alanine + D-glutamate + ATP = UDP-N-acetyl-alpha-D-muramoyl-L-alanyl-D-glutamate + ADP + phosphate + H(+)</text>
        <dbReference type="Rhea" id="RHEA:16429"/>
        <dbReference type="ChEBI" id="CHEBI:15378"/>
        <dbReference type="ChEBI" id="CHEBI:29986"/>
        <dbReference type="ChEBI" id="CHEBI:30616"/>
        <dbReference type="ChEBI" id="CHEBI:43474"/>
        <dbReference type="ChEBI" id="CHEBI:83898"/>
        <dbReference type="ChEBI" id="CHEBI:83900"/>
        <dbReference type="ChEBI" id="CHEBI:456216"/>
        <dbReference type="EC" id="6.3.2.9"/>
    </reaction>
</comment>
<comment type="pathway">
    <text evidence="2">Cell wall biogenesis; peptidoglycan biosynthesis.</text>
</comment>
<comment type="subcellular location">
    <subcellularLocation>
        <location evidence="2">Cytoplasm</location>
    </subcellularLocation>
</comment>
<comment type="similarity">
    <text evidence="2">Belongs to the MurCDEF family.</text>
</comment>
<comment type="sequence caution" evidence="1">
    <conflict type="erroneous initiation">
        <sequence resource="EMBL-CDS" id="BAH26450"/>
    </conflict>
    <text>Truncated N-terminus.</text>
</comment>
<reference key="1">
    <citation type="journal article" date="2009" name="Vaccine">
        <title>Whole genome sequence analysis of Mycobacterium bovis bacillus Calmette-Guerin (BCG) Tokyo 172: a comparative study of BCG vaccine substrains.</title>
        <authorList>
            <person name="Seki M."/>
            <person name="Honda I."/>
            <person name="Fujita I."/>
            <person name="Yano I."/>
            <person name="Yamamoto S."/>
            <person name="Koyama A."/>
        </authorList>
    </citation>
    <scope>NUCLEOTIDE SEQUENCE [LARGE SCALE GENOMIC DNA]</scope>
    <source>
        <strain>BCG / Tokyo 172 / ATCC 35737 / TMC 1019</strain>
    </source>
</reference>
<name>MURD_MYCBT</name>
<dbReference type="EC" id="6.3.2.9" evidence="2"/>
<dbReference type="EMBL" id="AP010918">
    <property type="protein sequence ID" value="BAH26450.1"/>
    <property type="status" value="ALT_INIT"/>
    <property type="molecule type" value="Genomic_DNA"/>
</dbReference>
<dbReference type="SMR" id="C1AQ71"/>
<dbReference type="KEGG" id="mbt:JTY_2166"/>
<dbReference type="HOGENOM" id="CLU_032540_0_0_11"/>
<dbReference type="UniPathway" id="UPA00219"/>
<dbReference type="GO" id="GO:0005737">
    <property type="term" value="C:cytoplasm"/>
    <property type="evidence" value="ECO:0007669"/>
    <property type="project" value="UniProtKB-SubCell"/>
</dbReference>
<dbReference type="GO" id="GO:0005524">
    <property type="term" value="F:ATP binding"/>
    <property type="evidence" value="ECO:0007669"/>
    <property type="project" value="UniProtKB-UniRule"/>
</dbReference>
<dbReference type="GO" id="GO:0008764">
    <property type="term" value="F:UDP-N-acetylmuramoylalanine-D-glutamate ligase activity"/>
    <property type="evidence" value="ECO:0007669"/>
    <property type="project" value="UniProtKB-UniRule"/>
</dbReference>
<dbReference type="GO" id="GO:0051301">
    <property type="term" value="P:cell division"/>
    <property type="evidence" value="ECO:0007669"/>
    <property type="project" value="UniProtKB-KW"/>
</dbReference>
<dbReference type="GO" id="GO:0071555">
    <property type="term" value="P:cell wall organization"/>
    <property type="evidence" value="ECO:0007669"/>
    <property type="project" value="UniProtKB-KW"/>
</dbReference>
<dbReference type="GO" id="GO:0009252">
    <property type="term" value="P:peptidoglycan biosynthetic process"/>
    <property type="evidence" value="ECO:0007669"/>
    <property type="project" value="UniProtKB-UniRule"/>
</dbReference>
<dbReference type="GO" id="GO:0008360">
    <property type="term" value="P:regulation of cell shape"/>
    <property type="evidence" value="ECO:0007669"/>
    <property type="project" value="UniProtKB-KW"/>
</dbReference>
<dbReference type="Gene3D" id="3.90.190.20">
    <property type="entry name" value="Mur ligase, C-terminal domain"/>
    <property type="match status" value="1"/>
</dbReference>
<dbReference type="Gene3D" id="3.40.1190.10">
    <property type="entry name" value="Mur-like, catalytic domain"/>
    <property type="match status" value="1"/>
</dbReference>
<dbReference type="Gene3D" id="3.40.50.720">
    <property type="entry name" value="NAD(P)-binding Rossmann-like Domain"/>
    <property type="match status" value="1"/>
</dbReference>
<dbReference type="HAMAP" id="MF_00639">
    <property type="entry name" value="MurD"/>
    <property type="match status" value="1"/>
</dbReference>
<dbReference type="InterPro" id="IPR036565">
    <property type="entry name" value="Mur-like_cat_sf"/>
</dbReference>
<dbReference type="InterPro" id="IPR004101">
    <property type="entry name" value="Mur_ligase_C"/>
</dbReference>
<dbReference type="InterPro" id="IPR036615">
    <property type="entry name" value="Mur_ligase_C_dom_sf"/>
</dbReference>
<dbReference type="InterPro" id="IPR013221">
    <property type="entry name" value="Mur_ligase_cen"/>
</dbReference>
<dbReference type="InterPro" id="IPR005762">
    <property type="entry name" value="MurD"/>
</dbReference>
<dbReference type="NCBIfam" id="TIGR01087">
    <property type="entry name" value="murD"/>
    <property type="match status" value="1"/>
</dbReference>
<dbReference type="PANTHER" id="PTHR43692">
    <property type="entry name" value="UDP-N-ACETYLMURAMOYLALANINE--D-GLUTAMATE LIGASE"/>
    <property type="match status" value="1"/>
</dbReference>
<dbReference type="PANTHER" id="PTHR43692:SF1">
    <property type="entry name" value="UDP-N-ACETYLMURAMOYLALANINE--D-GLUTAMATE LIGASE"/>
    <property type="match status" value="1"/>
</dbReference>
<dbReference type="Pfam" id="PF02875">
    <property type="entry name" value="Mur_ligase_C"/>
    <property type="match status" value="1"/>
</dbReference>
<dbReference type="Pfam" id="PF08245">
    <property type="entry name" value="Mur_ligase_M"/>
    <property type="match status" value="1"/>
</dbReference>
<dbReference type="SUPFAM" id="SSF51984">
    <property type="entry name" value="MurCD N-terminal domain"/>
    <property type="match status" value="1"/>
</dbReference>
<dbReference type="SUPFAM" id="SSF53623">
    <property type="entry name" value="MurD-like peptide ligases, catalytic domain"/>
    <property type="match status" value="1"/>
</dbReference>
<dbReference type="SUPFAM" id="SSF53244">
    <property type="entry name" value="MurD-like peptide ligases, peptide-binding domain"/>
    <property type="match status" value="1"/>
</dbReference>
<protein>
    <recommendedName>
        <fullName evidence="2">UDP-N-acetylmuramoylalanine--D-glutamate ligase</fullName>
        <ecNumber evidence="2">6.3.2.9</ecNumber>
    </recommendedName>
    <alternativeName>
        <fullName evidence="2">D-glutamic acid-adding enzyme</fullName>
    </alternativeName>
    <alternativeName>
        <fullName evidence="2">UDP-N-acetylmuramoyl-L-alanyl-D-glutamate synthetase</fullName>
    </alternativeName>
</protein>
<organism>
    <name type="scientific">Mycobacterium bovis (strain BCG / Tokyo 172 / ATCC 35737 / TMC 1019)</name>
    <dbReference type="NCBI Taxonomy" id="561275"/>
    <lineage>
        <taxon>Bacteria</taxon>
        <taxon>Bacillati</taxon>
        <taxon>Actinomycetota</taxon>
        <taxon>Actinomycetes</taxon>
        <taxon>Mycobacteriales</taxon>
        <taxon>Mycobacteriaceae</taxon>
        <taxon>Mycobacterium</taxon>
        <taxon>Mycobacterium tuberculosis complex</taxon>
    </lineage>
</organism>
<evidence type="ECO:0000250" key="1">
    <source>
        <dbReference type="UniProtKB" id="P9WJL5"/>
    </source>
</evidence>
<evidence type="ECO:0000255" key="2">
    <source>
        <dbReference type="HAMAP-Rule" id="MF_00639"/>
    </source>
</evidence>
<feature type="chain" id="PRO_1000147410" description="UDP-N-acetylmuramoylalanine--D-glutamate ligase">
    <location>
        <begin position="1"/>
        <end position="496"/>
    </location>
</feature>
<feature type="binding site" evidence="2">
    <location>
        <begin position="130"/>
        <end position="136"/>
    </location>
    <ligand>
        <name>ATP</name>
        <dbReference type="ChEBI" id="CHEBI:30616"/>
    </ligand>
</feature>